<name>MTNA_BOMMO</name>
<dbReference type="EC" id="5.3.1.23" evidence="1"/>
<dbReference type="EMBL" id="DQ645455">
    <property type="protein sequence ID" value="ABG54283.1"/>
    <property type="molecule type" value="mRNA"/>
</dbReference>
<dbReference type="RefSeq" id="NP_001037650.1">
    <property type="nucleotide sequence ID" value="NM_001044185.1"/>
</dbReference>
<dbReference type="FunCoup" id="Q0ZB81">
    <property type="interactions" value="1393"/>
</dbReference>
<dbReference type="STRING" id="7091.Q0ZB81"/>
<dbReference type="PaxDb" id="7091-BGIBMGA002478-TA"/>
<dbReference type="EnsemblMetazoa" id="NM_001044185.1">
    <property type="protein sequence ID" value="NP_001037650.1"/>
    <property type="gene ID" value="LOC733082"/>
</dbReference>
<dbReference type="GeneID" id="733082"/>
<dbReference type="KEGG" id="bmor:733082"/>
<dbReference type="eggNOG" id="KOG1468">
    <property type="taxonomic scope" value="Eukaryota"/>
</dbReference>
<dbReference type="HOGENOM" id="CLU_016218_1_3_1"/>
<dbReference type="InParanoid" id="Q0ZB81"/>
<dbReference type="OrthoDB" id="314290at7088"/>
<dbReference type="UniPathway" id="UPA00904">
    <property type="reaction ID" value="UER00874"/>
</dbReference>
<dbReference type="Proteomes" id="UP000005204">
    <property type="component" value="Unassembled WGS sequence"/>
</dbReference>
<dbReference type="GO" id="GO:0005737">
    <property type="term" value="C:cytoplasm"/>
    <property type="evidence" value="ECO:0007669"/>
    <property type="project" value="UniProtKB-SubCell"/>
</dbReference>
<dbReference type="GO" id="GO:0005634">
    <property type="term" value="C:nucleus"/>
    <property type="evidence" value="ECO:0007669"/>
    <property type="project" value="UniProtKB-SubCell"/>
</dbReference>
<dbReference type="GO" id="GO:0046523">
    <property type="term" value="F:S-methyl-5-thioribose-1-phosphate isomerase activity"/>
    <property type="evidence" value="ECO:0007669"/>
    <property type="project" value="UniProtKB-UniRule"/>
</dbReference>
<dbReference type="GO" id="GO:0019509">
    <property type="term" value="P:L-methionine salvage from methylthioadenosine"/>
    <property type="evidence" value="ECO:0007669"/>
    <property type="project" value="UniProtKB-UniRule"/>
</dbReference>
<dbReference type="FunFam" id="1.20.120.420:FF:000010">
    <property type="entry name" value="Methylthioribose-1-phosphate isomerase"/>
    <property type="match status" value="1"/>
</dbReference>
<dbReference type="FunFam" id="3.40.50.10470:FF:000003">
    <property type="entry name" value="Methylthioribose-1-phosphate isomerase"/>
    <property type="match status" value="1"/>
</dbReference>
<dbReference type="Gene3D" id="1.20.120.420">
    <property type="entry name" value="translation initiation factor eif-2b, domain 1"/>
    <property type="match status" value="1"/>
</dbReference>
<dbReference type="Gene3D" id="3.40.50.10470">
    <property type="entry name" value="Translation initiation factor eif-2b, domain 2"/>
    <property type="match status" value="1"/>
</dbReference>
<dbReference type="HAMAP" id="MF_01678">
    <property type="entry name" value="Salvage_MtnA"/>
    <property type="match status" value="1"/>
</dbReference>
<dbReference type="InterPro" id="IPR000649">
    <property type="entry name" value="IF-2B-related"/>
</dbReference>
<dbReference type="InterPro" id="IPR005251">
    <property type="entry name" value="IF-M1Pi"/>
</dbReference>
<dbReference type="InterPro" id="IPR042529">
    <property type="entry name" value="IF_2B-like_C"/>
</dbReference>
<dbReference type="InterPro" id="IPR011559">
    <property type="entry name" value="Initiation_fac_2B_a/b/d"/>
</dbReference>
<dbReference type="InterPro" id="IPR027363">
    <property type="entry name" value="M1Pi_N"/>
</dbReference>
<dbReference type="InterPro" id="IPR037171">
    <property type="entry name" value="NagB/RpiA_transferase-like"/>
</dbReference>
<dbReference type="NCBIfam" id="TIGR00524">
    <property type="entry name" value="eIF-2B_rel"/>
    <property type="match status" value="1"/>
</dbReference>
<dbReference type="NCBIfam" id="NF004326">
    <property type="entry name" value="PRK05720.1"/>
    <property type="match status" value="1"/>
</dbReference>
<dbReference type="NCBIfam" id="TIGR00512">
    <property type="entry name" value="salvage_mtnA"/>
    <property type="match status" value="1"/>
</dbReference>
<dbReference type="PANTHER" id="PTHR43475">
    <property type="entry name" value="METHYLTHIORIBOSE-1-PHOSPHATE ISOMERASE"/>
    <property type="match status" value="1"/>
</dbReference>
<dbReference type="PANTHER" id="PTHR43475:SF1">
    <property type="entry name" value="METHYLTHIORIBOSE-1-PHOSPHATE ISOMERASE"/>
    <property type="match status" value="1"/>
</dbReference>
<dbReference type="Pfam" id="PF01008">
    <property type="entry name" value="IF-2B"/>
    <property type="match status" value="1"/>
</dbReference>
<dbReference type="SUPFAM" id="SSF100950">
    <property type="entry name" value="NagB/RpiA/CoA transferase-like"/>
    <property type="match status" value="1"/>
</dbReference>
<proteinExistence type="evidence at transcript level"/>
<reference key="1">
    <citation type="submission" date="2006-05" db="EMBL/GenBank/DDBJ databases">
        <title>Translation initiation factors in Bombyx mori.</title>
        <authorList>
            <person name="Wang L.-L."/>
            <person name="Chen K.-P."/>
            <person name="Yao Q."/>
            <person name="Hu Z.-G."/>
            <person name="Chen H.-Q."/>
        </authorList>
    </citation>
    <scope>NUCLEOTIDE SEQUENCE [MRNA]</scope>
</reference>
<keyword id="KW-0028">Amino-acid biosynthesis</keyword>
<keyword id="KW-0963">Cytoplasm</keyword>
<keyword id="KW-0413">Isomerase</keyword>
<keyword id="KW-0486">Methionine biosynthesis</keyword>
<keyword id="KW-0539">Nucleus</keyword>
<keyword id="KW-1185">Reference proteome</keyword>
<accession>Q0ZB81</accession>
<feature type="chain" id="PRO_0000401974" description="Methylthioribose-1-phosphate isomerase">
    <location>
        <begin position="1"/>
        <end position="364"/>
    </location>
</feature>
<feature type="active site" description="Proton donor" evidence="1">
    <location>
        <position position="246"/>
    </location>
</feature>
<feature type="site" description="Transition state stabilizer" evidence="1">
    <location>
        <position position="166"/>
    </location>
</feature>
<comment type="function">
    <text evidence="1">Catalyzes the interconversion of methylthioribose-1-phosphate (MTR-1-P) into methylthioribulose-1-phosphate (MTRu-1-P).</text>
</comment>
<comment type="catalytic activity">
    <reaction evidence="1">
        <text>5-(methylsulfanyl)-alpha-D-ribose 1-phosphate = 5-(methylsulfanyl)-D-ribulose 1-phosphate</text>
        <dbReference type="Rhea" id="RHEA:19989"/>
        <dbReference type="ChEBI" id="CHEBI:58533"/>
        <dbReference type="ChEBI" id="CHEBI:58548"/>
        <dbReference type="EC" id="5.3.1.23"/>
    </reaction>
</comment>
<comment type="pathway">
    <text evidence="1">Amino-acid biosynthesis; L-methionine biosynthesis via salvage pathway; L-methionine from S-methyl-5-thio-alpha-D-ribose 1-phosphate: step 1/6.</text>
</comment>
<comment type="subcellular location">
    <subcellularLocation>
        <location evidence="1">Cytoplasm</location>
    </subcellularLocation>
    <subcellularLocation>
        <location evidence="1">Nucleus</location>
    </subcellularLocation>
</comment>
<comment type="similarity">
    <text evidence="1">Belongs to the eIF-2B alpha/beta/delta subunits family. MtnA subfamily.</text>
</comment>
<protein>
    <recommendedName>
        <fullName evidence="1">Methylthioribose-1-phosphate isomerase</fullName>
        <shortName evidence="1">M1Pi</shortName>
        <shortName evidence="1">MTR-1-P isomerase</shortName>
        <ecNumber evidence="1">5.3.1.23</ecNumber>
    </recommendedName>
    <alternativeName>
        <fullName evidence="1">S-methyl-5-thioribose-1-phosphate isomerase</fullName>
    </alternativeName>
    <alternativeName>
        <fullName evidence="1">Translation initiation factor eIF-2B subunit alpha/beta/delta-like protein</fullName>
    </alternativeName>
</protein>
<sequence>MSLESIKYTRGSLEILDQLLLPLQTRYIKVRGVEDGWKVINKMQVRGAPAIAIVGCLSLAVELSPDNESSKKNMRQEIEGKLNYLVSARPTAVNIKLAADELINLANTLCADDSISAEIFKERFIGSIEDMLTKDIHDNKAIGSLGCEAILKNIDGDSPVRVLTHCNTGSLATAGYGTALGVIRSLHATKRLEHVFCTETRPYNQGARLTAYELVHEKIPSTLMVDSMVSALMHTRKIHAVIVGADRVAANGDTANKMGTYQIAIVAKYHDVPFYVAAPLTSIDMSLPYGEKIKIEERPDREMTHIGEHRIAAPGINCWNPSFDVTPASLIAGIITEKGVFAPDHLKSVKXHVTGKKYYNIIHI</sequence>
<evidence type="ECO:0000255" key="1">
    <source>
        <dbReference type="HAMAP-Rule" id="MF_03119"/>
    </source>
</evidence>
<organism>
    <name type="scientific">Bombyx mori</name>
    <name type="common">Silk moth</name>
    <dbReference type="NCBI Taxonomy" id="7091"/>
    <lineage>
        <taxon>Eukaryota</taxon>
        <taxon>Metazoa</taxon>
        <taxon>Ecdysozoa</taxon>
        <taxon>Arthropoda</taxon>
        <taxon>Hexapoda</taxon>
        <taxon>Insecta</taxon>
        <taxon>Pterygota</taxon>
        <taxon>Neoptera</taxon>
        <taxon>Endopterygota</taxon>
        <taxon>Lepidoptera</taxon>
        <taxon>Glossata</taxon>
        <taxon>Ditrysia</taxon>
        <taxon>Bombycoidea</taxon>
        <taxon>Bombycidae</taxon>
        <taxon>Bombycinae</taxon>
        <taxon>Bombyx</taxon>
    </lineage>
</organism>